<accession>A5IVB5</accession>
<comment type="function">
    <text evidence="1">Metallothiol transferase which confers resistance to fosfomycin by catalyzing the addition of a thiol cofactor to fosfomycin. L-cysteine is probably the physiological thiol donor.</text>
</comment>
<comment type="cofactor">
    <cofactor evidence="1">
        <name>Mg(2+)</name>
        <dbReference type="ChEBI" id="CHEBI:18420"/>
    </cofactor>
</comment>
<comment type="subunit">
    <text evidence="1">Homodimer.</text>
</comment>
<comment type="subcellular location">
    <subcellularLocation>
        <location evidence="1">Cytoplasm</location>
    </subcellularLocation>
</comment>
<comment type="similarity">
    <text evidence="1">Belongs to the fosfomycin resistance protein family. FosB subfamily.</text>
</comment>
<evidence type="ECO:0000255" key="1">
    <source>
        <dbReference type="HAMAP-Rule" id="MF_01512"/>
    </source>
</evidence>
<evidence type="ECO:0000255" key="2">
    <source>
        <dbReference type="PROSITE-ProRule" id="PRU01163"/>
    </source>
</evidence>
<protein>
    <recommendedName>
        <fullName evidence="1">Metallothiol transferase FosB</fullName>
        <ecNumber evidence="1">2.5.1.-</ecNumber>
    </recommendedName>
    <alternativeName>
        <fullName evidence="1">Fosfomycin resistance protein</fullName>
    </alternativeName>
</protein>
<keyword id="KW-0046">Antibiotic resistance</keyword>
<keyword id="KW-0963">Cytoplasm</keyword>
<keyword id="KW-0460">Magnesium</keyword>
<keyword id="KW-0479">Metal-binding</keyword>
<keyword id="KW-0808">Transferase</keyword>
<gene>
    <name evidence="1" type="primary">fosB</name>
    <name type="ordered locus">SaurJH9_2358</name>
</gene>
<dbReference type="EC" id="2.5.1.-" evidence="1"/>
<dbReference type="EMBL" id="CP000703">
    <property type="protein sequence ID" value="ABQ50138.1"/>
    <property type="molecule type" value="Genomic_DNA"/>
</dbReference>
<dbReference type="RefSeq" id="WP_000920239.1">
    <property type="nucleotide sequence ID" value="NC_009487.1"/>
</dbReference>
<dbReference type="SMR" id="A5IVB5"/>
<dbReference type="KEGG" id="saj:SaurJH9_2358"/>
<dbReference type="HOGENOM" id="CLU_121356_0_0_9"/>
<dbReference type="GO" id="GO:0005737">
    <property type="term" value="C:cytoplasm"/>
    <property type="evidence" value="ECO:0007669"/>
    <property type="project" value="UniProtKB-SubCell"/>
</dbReference>
<dbReference type="GO" id="GO:0000287">
    <property type="term" value="F:magnesium ion binding"/>
    <property type="evidence" value="ECO:0007669"/>
    <property type="project" value="UniProtKB-UniRule"/>
</dbReference>
<dbReference type="GO" id="GO:0016765">
    <property type="term" value="F:transferase activity, transferring alkyl or aryl (other than methyl) groups"/>
    <property type="evidence" value="ECO:0007669"/>
    <property type="project" value="UniProtKB-UniRule"/>
</dbReference>
<dbReference type="GO" id="GO:0046677">
    <property type="term" value="P:response to antibiotic"/>
    <property type="evidence" value="ECO:0007669"/>
    <property type="project" value="UniProtKB-UniRule"/>
</dbReference>
<dbReference type="Gene3D" id="3.10.180.10">
    <property type="entry name" value="2,3-Dihydroxybiphenyl 1,2-Dioxygenase, domain 1"/>
    <property type="match status" value="1"/>
</dbReference>
<dbReference type="HAMAP" id="MF_01512">
    <property type="entry name" value="FosB"/>
    <property type="match status" value="1"/>
</dbReference>
<dbReference type="InterPro" id="IPR051332">
    <property type="entry name" value="Fosfomycin_Res_Enzymes"/>
</dbReference>
<dbReference type="InterPro" id="IPR029068">
    <property type="entry name" value="Glyas_Bleomycin-R_OHBP_Dase"/>
</dbReference>
<dbReference type="InterPro" id="IPR004360">
    <property type="entry name" value="Glyas_Fos-R_dOase_dom"/>
</dbReference>
<dbReference type="InterPro" id="IPR022858">
    <property type="entry name" value="Metallothiol_Trafse_FosB"/>
</dbReference>
<dbReference type="InterPro" id="IPR037523">
    <property type="entry name" value="VOC"/>
</dbReference>
<dbReference type="NCBIfam" id="NF000493">
    <property type="entry name" value="Fos_BSH"/>
    <property type="match status" value="1"/>
</dbReference>
<dbReference type="NCBIfam" id="NF003152">
    <property type="entry name" value="PRK04101.1"/>
    <property type="match status" value="1"/>
</dbReference>
<dbReference type="PANTHER" id="PTHR36113:SF6">
    <property type="entry name" value="FOSFOMYCIN RESISTANCE PROTEIN FOSX"/>
    <property type="match status" value="1"/>
</dbReference>
<dbReference type="PANTHER" id="PTHR36113">
    <property type="entry name" value="LYASE, PUTATIVE-RELATED-RELATED"/>
    <property type="match status" value="1"/>
</dbReference>
<dbReference type="Pfam" id="PF00903">
    <property type="entry name" value="Glyoxalase"/>
    <property type="match status" value="1"/>
</dbReference>
<dbReference type="SUPFAM" id="SSF54593">
    <property type="entry name" value="Glyoxalase/Bleomycin resistance protein/Dihydroxybiphenyl dioxygenase"/>
    <property type="match status" value="1"/>
</dbReference>
<dbReference type="PROSITE" id="PS51819">
    <property type="entry name" value="VOC"/>
    <property type="match status" value="1"/>
</dbReference>
<sequence>MLKSINHICFSVRNLNDSIHFYRDILLGKLLLTGKKTAYFELAGLWIALNEEKDIPRNEIHFSYTHIAFTIDDSEFKYWHQRLKDNNVNILEGRVRDIRDRQSIYFTDPDGHKLELHTGTLENRLNYYKEAKPHMTFYK</sequence>
<reference key="1">
    <citation type="submission" date="2007-05" db="EMBL/GenBank/DDBJ databases">
        <title>Complete sequence of chromosome of Staphylococcus aureus subsp. aureus JH9.</title>
        <authorList>
            <consortium name="US DOE Joint Genome Institute"/>
            <person name="Copeland A."/>
            <person name="Lucas S."/>
            <person name="Lapidus A."/>
            <person name="Barry K."/>
            <person name="Detter J.C."/>
            <person name="Glavina del Rio T."/>
            <person name="Hammon N."/>
            <person name="Israni S."/>
            <person name="Pitluck S."/>
            <person name="Chain P."/>
            <person name="Malfatti S."/>
            <person name="Shin M."/>
            <person name="Vergez L."/>
            <person name="Schmutz J."/>
            <person name="Larimer F."/>
            <person name="Land M."/>
            <person name="Hauser L."/>
            <person name="Kyrpides N."/>
            <person name="Kim E."/>
            <person name="Tomasz A."/>
            <person name="Richardson P."/>
        </authorList>
    </citation>
    <scope>NUCLEOTIDE SEQUENCE [LARGE SCALE GENOMIC DNA]</scope>
    <source>
        <strain>JH9</strain>
    </source>
</reference>
<proteinExistence type="inferred from homology"/>
<name>FOSB_STAA9</name>
<organism>
    <name type="scientific">Staphylococcus aureus (strain JH9)</name>
    <dbReference type="NCBI Taxonomy" id="359786"/>
    <lineage>
        <taxon>Bacteria</taxon>
        <taxon>Bacillati</taxon>
        <taxon>Bacillota</taxon>
        <taxon>Bacilli</taxon>
        <taxon>Bacillales</taxon>
        <taxon>Staphylococcaceae</taxon>
        <taxon>Staphylococcus</taxon>
    </lineage>
</organism>
<feature type="chain" id="PRO_1000087528" description="Metallothiol transferase FosB">
    <location>
        <begin position="1"/>
        <end position="139"/>
    </location>
</feature>
<feature type="domain" description="VOC" evidence="2">
    <location>
        <begin position="4"/>
        <end position="119"/>
    </location>
</feature>
<feature type="active site" description="Proton donor/acceptor" evidence="2">
    <location>
        <position position="115"/>
    </location>
</feature>
<feature type="binding site" evidence="1">
    <location>
        <position position="7"/>
    </location>
    <ligand>
        <name>Mg(2+)</name>
        <dbReference type="ChEBI" id="CHEBI:18420"/>
    </ligand>
</feature>
<feature type="binding site" evidence="1">
    <location>
        <position position="66"/>
    </location>
    <ligand>
        <name>Mg(2+)</name>
        <dbReference type="ChEBI" id="CHEBI:18420"/>
    </ligand>
</feature>
<feature type="binding site" evidence="1">
    <location>
        <position position="115"/>
    </location>
    <ligand>
        <name>Mg(2+)</name>
        <dbReference type="ChEBI" id="CHEBI:18420"/>
    </ligand>
</feature>